<dbReference type="EC" id="2.3.1.-" evidence="2 9 16 17"/>
<dbReference type="EMBL" id="AF083110">
    <property type="protein sequence ID" value="AAD40853.1"/>
    <property type="molecule type" value="mRNA"/>
</dbReference>
<dbReference type="EMBL" id="AK000355">
    <property type="protein sequence ID" value="BAA91107.1"/>
    <property type="molecule type" value="mRNA"/>
</dbReference>
<dbReference type="EMBL" id="AK294162">
    <property type="protein sequence ID" value="BAG57485.1"/>
    <property type="molecule type" value="mRNA"/>
</dbReference>
<dbReference type="EMBL" id="AK302467">
    <property type="protein sequence ID" value="BAG63757.1"/>
    <property type="molecule type" value="mRNA"/>
</dbReference>
<dbReference type="EMBL" id="AM393414">
    <property type="protein sequence ID" value="CAL38292.1"/>
    <property type="molecule type" value="mRNA"/>
</dbReference>
<dbReference type="EMBL" id="AL441883">
    <property type="status" value="NOT_ANNOTATED_CDS"/>
    <property type="molecule type" value="Genomic_DNA"/>
</dbReference>
<dbReference type="EMBL" id="CH471087">
    <property type="protein sequence ID" value="EAW55332.1"/>
    <property type="molecule type" value="Genomic_DNA"/>
</dbReference>
<dbReference type="EMBL" id="BC000126">
    <property type="protein sequence ID" value="AAH00126.1"/>
    <property type="molecule type" value="mRNA"/>
</dbReference>
<dbReference type="CCDS" id="CCDS4526.1">
    <molecule id="Q9NXA8-1"/>
</dbReference>
<dbReference type="CCDS" id="CCDS4527.1">
    <molecule id="Q9NXA8-2"/>
</dbReference>
<dbReference type="CCDS" id="CCDS54966.1">
    <molecule id="Q9NXA8-3"/>
</dbReference>
<dbReference type="RefSeq" id="NP_001180196.1">
    <molecule id="Q9NXA8-3"/>
    <property type="nucleotide sequence ID" value="NM_001193267.2"/>
</dbReference>
<dbReference type="RefSeq" id="NP_001229756.1">
    <molecule id="Q9NXA8-4"/>
    <property type="nucleotide sequence ID" value="NM_001242827.1"/>
</dbReference>
<dbReference type="RefSeq" id="NP_001363727.1">
    <molecule id="Q9NXA8-1"/>
    <property type="nucleotide sequence ID" value="NM_001376798.1"/>
</dbReference>
<dbReference type="RefSeq" id="NP_001363728.1">
    <molecule id="Q9NXA8-1"/>
    <property type="nucleotide sequence ID" value="NM_001376799.1"/>
</dbReference>
<dbReference type="RefSeq" id="NP_001363729.1">
    <molecule id="Q9NXA8-1"/>
    <property type="nucleotide sequence ID" value="NM_001376800.1"/>
</dbReference>
<dbReference type="RefSeq" id="NP_001363730.1">
    <molecule id="Q9NXA8-1"/>
    <property type="nucleotide sequence ID" value="NM_001376801.1"/>
</dbReference>
<dbReference type="RefSeq" id="NP_001363731.1">
    <molecule id="Q9NXA8-1"/>
    <property type="nucleotide sequence ID" value="NM_001376802.1"/>
</dbReference>
<dbReference type="RefSeq" id="NP_001363732.1">
    <molecule id="Q9NXA8-1"/>
    <property type="nucleotide sequence ID" value="NM_001376803.1"/>
</dbReference>
<dbReference type="RefSeq" id="NP_001363733.1">
    <molecule id="Q9NXA8-1"/>
    <property type="nucleotide sequence ID" value="NM_001376804.1"/>
</dbReference>
<dbReference type="RefSeq" id="NP_001363734.1">
    <molecule id="Q9NXA8-1"/>
    <property type="nucleotide sequence ID" value="NM_001376805.1"/>
</dbReference>
<dbReference type="RefSeq" id="NP_001363735.1">
    <molecule id="Q9NXA8-1"/>
    <property type="nucleotide sequence ID" value="NM_001376806.1"/>
</dbReference>
<dbReference type="RefSeq" id="NP_001363736.1">
    <molecule id="Q9NXA8-1"/>
    <property type="nucleotide sequence ID" value="NM_001376807.1"/>
</dbReference>
<dbReference type="RefSeq" id="NP_001363737.1">
    <molecule id="Q9NXA8-2"/>
    <property type="nucleotide sequence ID" value="NM_001376808.1"/>
</dbReference>
<dbReference type="RefSeq" id="NP_001363741.1">
    <molecule id="Q9NXA8-4"/>
    <property type="nucleotide sequence ID" value="NM_001376812.1"/>
</dbReference>
<dbReference type="RefSeq" id="NP_036373.1">
    <molecule id="Q9NXA8-1"/>
    <property type="nucleotide sequence ID" value="NM_012241.5"/>
</dbReference>
<dbReference type="RefSeq" id="NP_112534.1">
    <molecule id="Q9NXA8-2"/>
    <property type="nucleotide sequence ID" value="NM_031244.3"/>
</dbReference>
<dbReference type="RefSeq" id="XP_005249025.1">
    <property type="nucleotide sequence ID" value="XM_005248968.4"/>
</dbReference>
<dbReference type="RefSeq" id="XP_047274470.1">
    <molecule id="Q9NXA8-1"/>
    <property type="nucleotide sequence ID" value="XM_047418514.1"/>
</dbReference>
<dbReference type="RefSeq" id="XP_047274471.1">
    <molecule id="Q9NXA8-1"/>
    <property type="nucleotide sequence ID" value="XM_047418515.1"/>
</dbReference>
<dbReference type="RefSeq" id="XP_047274472.1">
    <molecule id="Q9NXA8-1"/>
    <property type="nucleotide sequence ID" value="XM_047418516.1"/>
</dbReference>
<dbReference type="RefSeq" id="XP_047274473.1">
    <molecule id="Q9NXA8-2"/>
    <property type="nucleotide sequence ID" value="XM_047418517.1"/>
</dbReference>
<dbReference type="RefSeq" id="XP_047274474.1">
    <molecule id="Q9NXA8-2"/>
    <property type="nucleotide sequence ID" value="XM_047418518.1"/>
</dbReference>
<dbReference type="RefSeq" id="XP_047274475.1">
    <molecule id="Q9NXA8-2"/>
    <property type="nucleotide sequence ID" value="XM_047418519.1"/>
</dbReference>
<dbReference type="RefSeq" id="XP_047274476.1">
    <molecule id="Q9NXA8-2"/>
    <property type="nucleotide sequence ID" value="XM_047418520.1"/>
</dbReference>
<dbReference type="RefSeq" id="XP_054210899.1">
    <molecule id="Q9NXA8-1"/>
    <property type="nucleotide sequence ID" value="XM_054354924.1"/>
</dbReference>
<dbReference type="RefSeq" id="XP_054210900.1">
    <molecule id="Q9NXA8-1"/>
    <property type="nucleotide sequence ID" value="XM_054354925.1"/>
</dbReference>
<dbReference type="RefSeq" id="XP_054210901.1">
    <molecule id="Q9NXA8-1"/>
    <property type="nucleotide sequence ID" value="XM_054354926.1"/>
</dbReference>
<dbReference type="RefSeq" id="XP_054210902.1">
    <molecule id="Q9NXA8-2"/>
    <property type="nucleotide sequence ID" value="XM_054354927.1"/>
</dbReference>
<dbReference type="RefSeq" id="XP_054210903.1">
    <molecule id="Q9NXA8-2"/>
    <property type="nucleotide sequence ID" value="XM_054354928.1"/>
</dbReference>
<dbReference type="RefSeq" id="XP_054210904.1">
    <molecule id="Q9NXA8-2"/>
    <property type="nucleotide sequence ID" value="XM_054354929.1"/>
</dbReference>
<dbReference type="RefSeq" id="XP_054210905.1">
    <molecule id="Q9NXA8-2"/>
    <property type="nucleotide sequence ID" value="XM_054354930.1"/>
</dbReference>
<dbReference type="PDB" id="2B4Y">
    <property type="method" value="X-ray"/>
    <property type="resolution" value="1.90 A"/>
    <property type="chains" value="A/B/C/D=34-302"/>
</dbReference>
<dbReference type="PDB" id="2NYR">
    <property type="method" value="X-ray"/>
    <property type="resolution" value="2.06 A"/>
    <property type="chains" value="A/B=34-302"/>
</dbReference>
<dbReference type="PDB" id="3RIG">
    <property type="method" value="X-ray"/>
    <property type="resolution" value="2.00 A"/>
    <property type="chains" value="A/B=34-302"/>
</dbReference>
<dbReference type="PDB" id="3RIY">
    <property type="method" value="X-ray"/>
    <property type="resolution" value="1.55 A"/>
    <property type="chains" value="A/B=34-302"/>
</dbReference>
<dbReference type="PDB" id="4F4U">
    <property type="method" value="X-ray"/>
    <property type="resolution" value="2.00 A"/>
    <property type="chains" value="A/B=34-302"/>
</dbReference>
<dbReference type="PDB" id="4F56">
    <property type="method" value="X-ray"/>
    <property type="resolution" value="1.70 A"/>
    <property type="chains" value="A/B=34-302"/>
</dbReference>
<dbReference type="PDB" id="4G1C">
    <property type="method" value="X-ray"/>
    <property type="resolution" value="1.94 A"/>
    <property type="chains" value="A/B=36-302"/>
</dbReference>
<dbReference type="PDB" id="4HDA">
    <property type="method" value="X-ray"/>
    <property type="resolution" value="2.60 A"/>
    <property type="chains" value="A/B=34-302"/>
</dbReference>
<dbReference type="PDB" id="5BWL">
    <property type="method" value="X-ray"/>
    <property type="resolution" value="1.55 A"/>
    <property type="chains" value="A=33-302"/>
</dbReference>
<dbReference type="PDB" id="5XHS">
    <property type="method" value="X-ray"/>
    <property type="resolution" value="2.19 A"/>
    <property type="chains" value="A=34-302"/>
</dbReference>
<dbReference type="PDB" id="6ACE">
    <property type="method" value="X-ray"/>
    <property type="resolution" value="1.98 A"/>
    <property type="chains" value="A=36-302"/>
</dbReference>
<dbReference type="PDB" id="6ACL">
    <property type="method" value="X-ray"/>
    <property type="resolution" value="1.92 A"/>
    <property type="chains" value="A=36-302"/>
</dbReference>
<dbReference type="PDB" id="6ACO">
    <property type="method" value="X-ray"/>
    <property type="resolution" value="1.71 A"/>
    <property type="chains" value="A=34-302"/>
</dbReference>
<dbReference type="PDB" id="6ACP">
    <property type="method" value="X-ray"/>
    <property type="resolution" value="2.30 A"/>
    <property type="chains" value="A=36-302"/>
</dbReference>
<dbReference type="PDB" id="6EQS">
    <property type="method" value="X-ray"/>
    <property type="resolution" value="1.32 A"/>
    <property type="chains" value="A/B/C/D=34-302"/>
</dbReference>
<dbReference type="PDB" id="6LJK">
    <property type="method" value="X-ray"/>
    <property type="resolution" value="1.39 A"/>
    <property type="chains" value="A=34-302"/>
</dbReference>
<dbReference type="PDB" id="6LJM">
    <property type="method" value="X-ray"/>
    <property type="resolution" value="1.78 A"/>
    <property type="chains" value="A=34-302"/>
</dbReference>
<dbReference type="PDB" id="6LJN">
    <property type="method" value="X-ray"/>
    <property type="resolution" value="1.80 A"/>
    <property type="chains" value="A=34-302"/>
</dbReference>
<dbReference type="PDB" id="7X3P">
    <property type="method" value="X-ray"/>
    <property type="resolution" value="1.56 A"/>
    <property type="chains" value="A=34-310"/>
</dbReference>
<dbReference type="PDB" id="8GBL">
    <property type="method" value="X-ray"/>
    <property type="resolution" value="2.24 A"/>
    <property type="chains" value="A/B=32-302"/>
</dbReference>
<dbReference type="PDB" id="8GBN">
    <property type="method" value="X-ray"/>
    <property type="resolution" value="2.70 A"/>
    <property type="chains" value="A/B=32-302"/>
</dbReference>
<dbReference type="PDBsum" id="2B4Y"/>
<dbReference type="PDBsum" id="2NYR"/>
<dbReference type="PDBsum" id="3RIG"/>
<dbReference type="PDBsum" id="3RIY"/>
<dbReference type="PDBsum" id="4F4U"/>
<dbReference type="PDBsum" id="4F56"/>
<dbReference type="PDBsum" id="4G1C"/>
<dbReference type="PDBsum" id="4HDA"/>
<dbReference type="PDBsum" id="5BWL"/>
<dbReference type="PDBsum" id="5XHS"/>
<dbReference type="PDBsum" id="6ACE"/>
<dbReference type="PDBsum" id="6ACL"/>
<dbReference type="PDBsum" id="6ACO"/>
<dbReference type="PDBsum" id="6ACP"/>
<dbReference type="PDBsum" id="6EQS"/>
<dbReference type="PDBsum" id="6LJK"/>
<dbReference type="PDBsum" id="6LJM"/>
<dbReference type="PDBsum" id="6LJN"/>
<dbReference type="PDBsum" id="7X3P"/>
<dbReference type="PDBsum" id="8GBL"/>
<dbReference type="PDBsum" id="8GBN"/>
<dbReference type="SMR" id="Q9NXA8"/>
<dbReference type="BioGRID" id="116980">
    <property type="interactions" value="69"/>
</dbReference>
<dbReference type="FunCoup" id="Q9NXA8">
    <property type="interactions" value="1237"/>
</dbReference>
<dbReference type="IntAct" id="Q9NXA8">
    <property type="interactions" value="45"/>
</dbReference>
<dbReference type="MINT" id="Q9NXA8"/>
<dbReference type="STRING" id="9606.ENSP00000476228"/>
<dbReference type="BindingDB" id="Q9NXA8"/>
<dbReference type="ChEMBL" id="CHEMBL2163183"/>
<dbReference type="DrugBank" id="DB03478">
    <property type="generic name" value="2'-O-Acetyl Adenosine-5-Diphosphoribose"/>
</dbReference>
<dbReference type="DrugBank" id="DB02059">
    <property type="generic name" value="Adenosine-5-Diphosphoribose"/>
</dbReference>
<dbReference type="DrugBank" id="DB15493">
    <property type="generic name" value="Cambinol"/>
</dbReference>
<dbReference type="DrugBank" id="DB02701">
    <property type="generic name" value="Nicotinamide"/>
</dbReference>
<dbReference type="DrugBank" id="DB04786">
    <property type="generic name" value="Suramin"/>
</dbReference>
<dbReference type="DrugCentral" id="Q9NXA8"/>
<dbReference type="GuidetoPHARMACOLOGY" id="2711"/>
<dbReference type="GlyGen" id="Q9NXA8">
    <property type="glycosylation" value="1 site, 1 O-linked glycan (1 site)"/>
</dbReference>
<dbReference type="iPTMnet" id="Q9NXA8"/>
<dbReference type="PhosphoSitePlus" id="Q9NXA8"/>
<dbReference type="SwissPalm" id="Q9NXA8"/>
<dbReference type="BioMuta" id="SIRT5"/>
<dbReference type="DMDM" id="38258652"/>
<dbReference type="jPOST" id="Q9NXA8"/>
<dbReference type="MassIVE" id="Q9NXA8"/>
<dbReference type="PaxDb" id="9606-ENSP00000476228"/>
<dbReference type="PeptideAtlas" id="Q9NXA8"/>
<dbReference type="ProteomicsDB" id="83064">
    <molecule id="Q9NXA8-1"/>
</dbReference>
<dbReference type="ProteomicsDB" id="83065">
    <molecule id="Q9NXA8-2"/>
</dbReference>
<dbReference type="ProteomicsDB" id="83066">
    <molecule id="Q9NXA8-3"/>
</dbReference>
<dbReference type="ProteomicsDB" id="83067">
    <molecule id="Q9NXA8-4"/>
</dbReference>
<dbReference type="Pumba" id="Q9NXA8"/>
<dbReference type="ABCD" id="Q9NXA8">
    <property type="antibodies" value="5 sequenced antibodies"/>
</dbReference>
<dbReference type="Antibodypedia" id="10177">
    <property type="antibodies" value="675 antibodies from 44 providers"/>
</dbReference>
<dbReference type="DNASU" id="23408"/>
<dbReference type="Ensembl" id="ENST00000359782.8">
    <molecule id="Q9NXA8-3"/>
    <property type="protein sequence ID" value="ENSP00000352830.3"/>
    <property type="gene ID" value="ENSG00000124523.17"/>
</dbReference>
<dbReference type="Ensembl" id="ENST00000379262.8">
    <molecule id="Q9NXA8-2"/>
    <property type="protein sequence ID" value="ENSP00000368564.4"/>
    <property type="gene ID" value="ENSG00000124523.17"/>
</dbReference>
<dbReference type="Ensembl" id="ENST00000397350.7">
    <molecule id="Q9NXA8-1"/>
    <property type="protein sequence ID" value="ENSP00000380509.3"/>
    <property type="gene ID" value="ENSG00000124523.17"/>
</dbReference>
<dbReference type="Ensembl" id="ENST00000606117.2">
    <molecule id="Q9NXA8-1"/>
    <property type="protein sequence ID" value="ENSP00000476228.1"/>
    <property type="gene ID" value="ENSG00000124523.17"/>
</dbReference>
<dbReference type="Ensembl" id="ENST00000680151.1">
    <molecule id="Q9NXA8-1"/>
    <property type="protein sequence ID" value="ENSP00000505086.1"/>
    <property type="gene ID" value="ENSG00000124523.17"/>
</dbReference>
<dbReference type="Ensembl" id="ENST00000680432.1">
    <molecule id="Q9NXA8-1"/>
    <property type="protein sequence ID" value="ENSP00000505496.1"/>
    <property type="gene ID" value="ENSG00000124523.17"/>
</dbReference>
<dbReference type="Ensembl" id="ENST00000680707.1">
    <molecule id="Q9NXA8-2"/>
    <property type="protein sequence ID" value="ENSP00000505469.1"/>
    <property type="gene ID" value="ENSG00000124523.17"/>
</dbReference>
<dbReference type="GeneID" id="23408"/>
<dbReference type="KEGG" id="hsa:23408"/>
<dbReference type="MANE-Select" id="ENST00000606117.2">
    <property type="protein sequence ID" value="ENSP00000476228.1"/>
    <property type="RefSeq nucleotide sequence ID" value="NM_012241.5"/>
    <property type="RefSeq protein sequence ID" value="NP_036373.1"/>
</dbReference>
<dbReference type="UCSC" id="uc003naw.4">
    <molecule id="Q9NXA8-1"/>
    <property type="organism name" value="human"/>
</dbReference>
<dbReference type="AGR" id="HGNC:14933"/>
<dbReference type="CTD" id="23408"/>
<dbReference type="DisGeNET" id="23408"/>
<dbReference type="GeneCards" id="SIRT5"/>
<dbReference type="HGNC" id="HGNC:14933">
    <property type="gene designation" value="SIRT5"/>
</dbReference>
<dbReference type="HPA" id="ENSG00000124523">
    <property type="expression patterns" value="Low tissue specificity"/>
</dbReference>
<dbReference type="MIM" id="604483">
    <property type="type" value="gene"/>
</dbReference>
<dbReference type="neXtProt" id="NX_Q9NXA8"/>
<dbReference type="OpenTargets" id="ENSG00000124523"/>
<dbReference type="PharmGKB" id="PA37938"/>
<dbReference type="VEuPathDB" id="HostDB:ENSG00000124523"/>
<dbReference type="eggNOG" id="KOG2684">
    <property type="taxonomic scope" value="Eukaryota"/>
</dbReference>
<dbReference type="GeneTree" id="ENSGT00940000156080"/>
<dbReference type="HOGENOM" id="CLU_023643_3_1_1"/>
<dbReference type="InParanoid" id="Q9NXA8"/>
<dbReference type="OMA" id="LIHMHGE"/>
<dbReference type="OrthoDB" id="424302at2759"/>
<dbReference type="PAN-GO" id="Q9NXA8">
    <property type="GO annotations" value="8 GO annotations based on evolutionary models"/>
</dbReference>
<dbReference type="PhylomeDB" id="Q9NXA8"/>
<dbReference type="TreeFam" id="TF106183"/>
<dbReference type="BRENDA" id="2.3.1.B43">
    <property type="organism ID" value="2681"/>
</dbReference>
<dbReference type="PathwayCommons" id="Q9NXA8"/>
<dbReference type="Reactome" id="R-HSA-2151201">
    <property type="pathway name" value="Transcriptional activation of mitochondrial biogenesis"/>
</dbReference>
<dbReference type="SABIO-RK" id="Q9NXA8"/>
<dbReference type="SignaLink" id="Q9NXA8"/>
<dbReference type="SIGNOR" id="Q9NXA8"/>
<dbReference type="BioGRID-ORCS" id="23408">
    <property type="hits" value="14 hits in 1194 CRISPR screens"/>
</dbReference>
<dbReference type="ChiTaRS" id="SIRT5">
    <property type="organism name" value="human"/>
</dbReference>
<dbReference type="EvolutionaryTrace" id="Q9NXA8"/>
<dbReference type="GeneWiki" id="SIRT5"/>
<dbReference type="GenomeRNAi" id="23408"/>
<dbReference type="Pharos" id="Q9NXA8">
    <property type="development level" value="Tchem"/>
</dbReference>
<dbReference type="PRO" id="PR:Q9NXA8"/>
<dbReference type="Proteomes" id="UP000005640">
    <property type="component" value="Chromosome 6"/>
</dbReference>
<dbReference type="RNAct" id="Q9NXA8">
    <property type="molecule type" value="protein"/>
</dbReference>
<dbReference type="Bgee" id="ENSG00000124523">
    <property type="expression patterns" value="Expressed in diaphragm and 203 other cell types or tissues"/>
</dbReference>
<dbReference type="ExpressionAtlas" id="Q9NXA8">
    <property type="expression patterns" value="baseline and differential"/>
</dbReference>
<dbReference type="GO" id="GO:0005829">
    <property type="term" value="C:cytosol"/>
    <property type="evidence" value="ECO:0000314"/>
    <property type="project" value="UniProtKB"/>
</dbReference>
<dbReference type="GO" id="GO:0005743">
    <property type="term" value="C:mitochondrial inner membrane"/>
    <property type="evidence" value="ECO:0007669"/>
    <property type="project" value="Ensembl"/>
</dbReference>
<dbReference type="GO" id="GO:0005758">
    <property type="term" value="C:mitochondrial intermembrane space"/>
    <property type="evidence" value="ECO:0000314"/>
    <property type="project" value="UniProtKB"/>
</dbReference>
<dbReference type="GO" id="GO:0005759">
    <property type="term" value="C:mitochondrial matrix"/>
    <property type="evidence" value="ECO:0000314"/>
    <property type="project" value="UniProtKB"/>
</dbReference>
<dbReference type="GO" id="GO:0005739">
    <property type="term" value="C:mitochondrion"/>
    <property type="evidence" value="ECO:0000314"/>
    <property type="project" value="HPA"/>
</dbReference>
<dbReference type="GO" id="GO:0005634">
    <property type="term" value="C:nucleus"/>
    <property type="evidence" value="ECO:0000318"/>
    <property type="project" value="GO_Central"/>
</dbReference>
<dbReference type="GO" id="GO:0017136">
    <property type="term" value="F:histone deacetylase activity, NAD-dependent"/>
    <property type="evidence" value="ECO:0000318"/>
    <property type="project" value="GO_Central"/>
</dbReference>
<dbReference type="GO" id="GO:0070403">
    <property type="term" value="F:NAD+ binding"/>
    <property type="evidence" value="ECO:0000314"/>
    <property type="project" value="UniProtKB"/>
</dbReference>
<dbReference type="GO" id="GO:0034979">
    <property type="term" value="F:NAD-dependent protein lysine deacetylase activity"/>
    <property type="evidence" value="ECO:0000304"/>
    <property type="project" value="Reactome"/>
</dbReference>
<dbReference type="GO" id="GO:0061697">
    <property type="term" value="F:protein-glutaryllysine deglutarylase activity"/>
    <property type="evidence" value="ECO:0000314"/>
    <property type="project" value="UniProtKB"/>
</dbReference>
<dbReference type="GO" id="GO:0036054">
    <property type="term" value="F:protein-malonyllysine demalonylase activity"/>
    <property type="evidence" value="ECO:0000314"/>
    <property type="project" value="UniProtKB"/>
</dbReference>
<dbReference type="GO" id="GO:0036055">
    <property type="term" value="F:protein-succinyllysine desuccinylase activity"/>
    <property type="evidence" value="ECO:0000314"/>
    <property type="project" value="UniProtKB"/>
</dbReference>
<dbReference type="GO" id="GO:0008270">
    <property type="term" value="F:zinc ion binding"/>
    <property type="evidence" value="ECO:0000314"/>
    <property type="project" value="UniProtKB"/>
</dbReference>
<dbReference type="GO" id="GO:0007005">
    <property type="term" value="P:mitochondrion organization"/>
    <property type="evidence" value="ECO:0000304"/>
    <property type="project" value="Reactome"/>
</dbReference>
<dbReference type="GO" id="GO:0010667">
    <property type="term" value="P:negative regulation of cardiac muscle cell apoptotic process"/>
    <property type="evidence" value="ECO:0007669"/>
    <property type="project" value="Ensembl"/>
</dbReference>
<dbReference type="GO" id="GO:2000378">
    <property type="term" value="P:negative regulation of reactive oxygen species metabolic process"/>
    <property type="evidence" value="ECO:0000314"/>
    <property type="project" value="UniProtKB"/>
</dbReference>
<dbReference type="GO" id="GO:0036047">
    <property type="term" value="P:peptidyl-lysine demalonylation"/>
    <property type="evidence" value="ECO:0000314"/>
    <property type="project" value="UniProtKB"/>
</dbReference>
<dbReference type="GO" id="GO:0036049">
    <property type="term" value="P:peptidyl-lysine desuccinylation"/>
    <property type="evidence" value="ECO:0000314"/>
    <property type="project" value="UniProtKB"/>
</dbReference>
<dbReference type="GO" id="GO:0006476">
    <property type="term" value="P:protein deacetylation"/>
    <property type="evidence" value="ECO:0000314"/>
    <property type="project" value="UniProtKB"/>
</dbReference>
<dbReference type="GO" id="GO:0061698">
    <property type="term" value="P:protein deglutarylation"/>
    <property type="evidence" value="ECO:0000314"/>
    <property type="project" value="UniProtKB"/>
</dbReference>
<dbReference type="GO" id="GO:0036046">
    <property type="term" value="P:protein demalonylation"/>
    <property type="evidence" value="ECO:0000314"/>
    <property type="project" value="UniProtKB"/>
</dbReference>
<dbReference type="GO" id="GO:0036048">
    <property type="term" value="P:protein desuccinylation"/>
    <property type="evidence" value="ECO:0000314"/>
    <property type="project" value="UniProtKB"/>
</dbReference>
<dbReference type="GO" id="GO:0010566">
    <property type="term" value="P:regulation of ketone biosynthetic process"/>
    <property type="evidence" value="ECO:0000250"/>
    <property type="project" value="UniProtKB"/>
</dbReference>
<dbReference type="GO" id="GO:0002931">
    <property type="term" value="P:response to ischemia"/>
    <property type="evidence" value="ECO:0007669"/>
    <property type="project" value="Ensembl"/>
</dbReference>
<dbReference type="GO" id="GO:0031667">
    <property type="term" value="P:response to nutrient levels"/>
    <property type="evidence" value="ECO:0007669"/>
    <property type="project" value="Ensembl"/>
</dbReference>
<dbReference type="CDD" id="cd01412">
    <property type="entry name" value="SIRT5_Af1_CobB"/>
    <property type="match status" value="1"/>
</dbReference>
<dbReference type="FunFam" id="3.30.1600.10:FF:000005">
    <property type="entry name" value="NAD-dependent protein deacylase sirtuin-5, mitochondrial"/>
    <property type="match status" value="1"/>
</dbReference>
<dbReference type="Gene3D" id="3.30.1600.10">
    <property type="entry name" value="SIR2/SIRT2 'Small Domain"/>
    <property type="match status" value="1"/>
</dbReference>
<dbReference type="Gene3D" id="3.40.50.1220">
    <property type="entry name" value="TPP-binding domain"/>
    <property type="match status" value="1"/>
</dbReference>
<dbReference type="HAMAP" id="MF_01121">
    <property type="entry name" value="Sirtuin_ClassIII"/>
    <property type="match status" value="1"/>
</dbReference>
<dbReference type="IDEAL" id="IID00502"/>
<dbReference type="InterPro" id="IPR029035">
    <property type="entry name" value="DHS-like_NAD/FAD-binding_dom"/>
</dbReference>
<dbReference type="InterPro" id="IPR050134">
    <property type="entry name" value="NAD-dep_sirtuin_deacylases"/>
</dbReference>
<dbReference type="InterPro" id="IPR003000">
    <property type="entry name" value="Sirtuin"/>
</dbReference>
<dbReference type="InterPro" id="IPR026591">
    <property type="entry name" value="Sirtuin_cat_small_dom_sf"/>
</dbReference>
<dbReference type="InterPro" id="IPR027546">
    <property type="entry name" value="Sirtuin_class_III"/>
</dbReference>
<dbReference type="InterPro" id="IPR026590">
    <property type="entry name" value="Ssirtuin_cat_dom"/>
</dbReference>
<dbReference type="PANTHER" id="PTHR11085">
    <property type="entry name" value="NAD-DEPENDENT PROTEIN DEACYLASE SIRTUIN-5, MITOCHONDRIAL-RELATED"/>
    <property type="match status" value="1"/>
</dbReference>
<dbReference type="PANTHER" id="PTHR11085:SF10">
    <property type="entry name" value="NAD-DEPENDENT PROTEIN DEACYLASE SIRTUIN-5, MITOCHONDRIAL-RELATED"/>
    <property type="match status" value="1"/>
</dbReference>
<dbReference type="Pfam" id="PF02146">
    <property type="entry name" value="SIR2"/>
    <property type="match status" value="1"/>
</dbReference>
<dbReference type="SUPFAM" id="SSF52467">
    <property type="entry name" value="DHS-like NAD/FAD-binding domain"/>
    <property type="match status" value="1"/>
</dbReference>
<dbReference type="PROSITE" id="PS50305">
    <property type="entry name" value="SIRTUIN"/>
    <property type="match status" value="1"/>
</dbReference>
<organism>
    <name type="scientific">Homo sapiens</name>
    <name type="common">Human</name>
    <dbReference type="NCBI Taxonomy" id="9606"/>
    <lineage>
        <taxon>Eukaryota</taxon>
        <taxon>Metazoa</taxon>
        <taxon>Chordata</taxon>
        <taxon>Craniata</taxon>
        <taxon>Vertebrata</taxon>
        <taxon>Euteleostomi</taxon>
        <taxon>Mammalia</taxon>
        <taxon>Eutheria</taxon>
        <taxon>Euarchontoglires</taxon>
        <taxon>Primates</taxon>
        <taxon>Haplorrhini</taxon>
        <taxon>Catarrhini</taxon>
        <taxon>Hominidae</taxon>
        <taxon>Homo</taxon>
    </lineage>
</organism>
<name>SIR5_HUMAN</name>
<comment type="function">
    <text evidence="1 6 8 9 15 16 17">NAD-dependent lysine demalonylase, desuccinylase and deglutarylase that specifically removes malonyl, succinyl and glutaryl groups on target proteins (PubMed:21908771, PubMed:22076378, PubMed:24703693, PubMed:29180469). Activates CPS1 and contributes to the regulation of blood ammonia levels during prolonged fasting: acts by mediating desuccinylation and deglutarylation of CPS1, thereby increasing CPS1 activity in response to elevated NAD levels during fasting (PubMed:22076378, PubMed:24703693). Activates SOD1 by mediating its desuccinylation, leading to reduced reactive oxygen species (PubMed:24140062). Activates SHMT2 by mediating its desuccinylation (PubMed:29180469). Modulates ketogenesis through the desuccinylation and activation of HMGCS2 (By similarity). Has weak NAD-dependent protein deacetylase activity; however this activity may not be physiologically relevant in vivo. Can deacetylate cytochrome c (CYCS) and a number of other proteins in vitro such as UOX.</text>
</comment>
<comment type="catalytic activity">
    <reaction evidence="2 9">
        <text>N(6)-malonyl-L-lysyl-[protein] + NAD(+) + H2O = 2''-O-malonyl-ADP-D-ribose + nicotinamide + L-lysyl-[protein]</text>
        <dbReference type="Rhea" id="RHEA:47672"/>
        <dbReference type="Rhea" id="RHEA-COMP:9752"/>
        <dbReference type="Rhea" id="RHEA-COMP:11878"/>
        <dbReference type="ChEBI" id="CHEBI:15377"/>
        <dbReference type="ChEBI" id="CHEBI:17154"/>
        <dbReference type="ChEBI" id="CHEBI:29969"/>
        <dbReference type="ChEBI" id="CHEBI:57540"/>
        <dbReference type="ChEBI" id="CHEBI:87831"/>
        <dbReference type="ChEBI" id="CHEBI:87833"/>
    </reaction>
</comment>
<comment type="catalytic activity">
    <reaction evidence="2 9 17">
        <text>N(6)-succinyl-L-lysyl-[protein] + NAD(+) + H2O = 2''-O-succinyl-ADP-D-ribose + nicotinamide + L-lysyl-[protein]</text>
        <dbReference type="Rhea" id="RHEA:47668"/>
        <dbReference type="Rhea" id="RHEA-COMP:9752"/>
        <dbReference type="Rhea" id="RHEA-COMP:11877"/>
        <dbReference type="ChEBI" id="CHEBI:15377"/>
        <dbReference type="ChEBI" id="CHEBI:17154"/>
        <dbReference type="ChEBI" id="CHEBI:29969"/>
        <dbReference type="ChEBI" id="CHEBI:57540"/>
        <dbReference type="ChEBI" id="CHEBI:87830"/>
        <dbReference type="ChEBI" id="CHEBI:87832"/>
    </reaction>
</comment>
<comment type="catalytic activity">
    <reaction evidence="2 16">
        <text>N(6)-glutaryl-L-lysyl-[protein] + NAD(+) + H2O = 2''-O-glutaryl-ADP-D-ribose + nicotinamide + L-lysyl-[protein]</text>
        <dbReference type="Rhea" id="RHEA:47664"/>
        <dbReference type="Rhea" id="RHEA-COMP:9752"/>
        <dbReference type="Rhea" id="RHEA-COMP:11875"/>
        <dbReference type="ChEBI" id="CHEBI:15377"/>
        <dbReference type="ChEBI" id="CHEBI:17154"/>
        <dbReference type="ChEBI" id="CHEBI:29969"/>
        <dbReference type="ChEBI" id="CHEBI:57540"/>
        <dbReference type="ChEBI" id="CHEBI:87828"/>
        <dbReference type="ChEBI" id="CHEBI:87829"/>
    </reaction>
</comment>
<comment type="cofactor">
    <cofactor evidence="2 9">
        <name>Zn(2+)</name>
        <dbReference type="ChEBI" id="CHEBI:29105"/>
    </cofactor>
    <text evidence="2 9">Binds 1 zinc ion per subunit.</text>
</comment>
<comment type="activity regulation">
    <text evidence="5 12 13">Inhibited by suramin. NAD-dependent lysine desuccinylase activity is inhibited by physiological nicotinamide concentrations, while deacetylase activity is not. In contrast, resveratrol activates deacetylase activity, while inhibiting desuccinylase activity.</text>
</comment>
<comment type="biophysicochemical properties">
    <kinetics>
        <KM evidence="9">6.1 uM for a synthetic histone H3K9 malonyllysine peptide</KM>
        <KM evidence="9">5.8 uM for a synthetic histone H3K9 succinyllysine peptide</KM>
        <KM evidence="9">8.7 uM for a synthetic GLUD1 peptide malonylated at 'Lys-503'</KM>
        <KM evidence="9">14 uM for a synthetic GLUD1 peptide succinylated at 'Lys-503'</KM>
        <KM evidence="9">150 uM for a synthetic ACSS1 peptide malonylated at 'Lys-628'</KM>
        <KM evidence="9">450 uM for a synthetic ACSS1 peptide succinylated at 'Lys-628'</KM>
    </kinetics>
</comment>
<comment type="subunit">
    <text evidence="1 5 9 10 11 13 14 18">Interacts with CPS1 (By similarity). Interacts with PCCA (PubMed:23438705). Monomer (PubMed:17355872). Homodimer (PubMed:17355872). Forms homodimers upon suramin binding (PubMed:17355872).</text>
</comment>
<comment type="subcellular location">
    <subcellularLocation>
        <location>Mitochondrion matrix</location>
    </subcellularLocation>
    <subcellularLocation>
        <location>Mitochondrion intermembrane space</location>
    </subcellularLocation>
    <subcellularLocation>
        <location>Cytoplasm</location>
        <location>Cytosol</location>
    </subcellularLocation>
    <subcellularLocation>
        <location>Nucleus</location>
    </subcellularLocation>
    <text>Mainly mitochondrial. Also present extramitochondrially, with a fraction present in the cytosol and very small amounts also detected in the nucleus.</text>
</comment>
<comment type="subcellular location">
    <molecule>Isoform 1</molecule>
    <subcellularLocation>
        <location evidence="7">Cytoplasm</location>
    </subcellularLocation>
    <subcellularLocation>
        <location evidence="2 7">Mitochondrion</location>
    </subcellularLocation>
</comment>
<comment type="subcellular location">
    <molecule>Isoform 2</molecule>
    <subcellularLocation>
        <location evidence="2 7">Mitochondrion</location>
    </subcellularLocation>
</comment>
<comment type="alternative products">
    <event type="alternative splicing"/>
    <isoform>
        <id>Q9NXA8-1</id>
        <name>1</name>
        <sequence type="displayed"/>
    </isoform>
    <isoform>
        <id>Q9NXA8-2</id>
        <name>2</name>
        <sequence type="described" ref="VSP_008730 VSP_008731"/>
    </isoform>
    <isoform>
        <id>Q9NXA8-3</id>
        <name>3</name>
        <sequence type="described" ref="VSP_042292"/>
    </isoform>
    <isoform>
        <id>Q9NXA8-4</id>
        <name>4</name>
        <sequence type="described" ref="VSP_042291"/>
    </isoform>
</comment>
<comment type="tissue specificity">
    <text evidence="4">Widely expressed.</text>
</comment>
<comment type="domain">
    <text evidence="9">In contrast to class I sirtuins, class III sirtuins have only weak deacetylase activity. Difference in substrate specificity is probably due to a larger hydrophobic pocket with 2 residues (Tyr-102 and Arg-105) that bind to malonylated and succinylated substrates and define the specificity (PubMed:22076378).</text>
</comment>
<comment type="miscellaneous">
    <text evidence="21">The mechanism of demalonylation and desuccinylation involves the presence of a 1',2'-cyclic intermediate, suggesting that sirtuins use the ADP-ribose-peptidylamidate mechanism to remove acyl groups from substrate lysine residues.</text>
</comment>
<comment type="similarity">
    <text evidence="2">Belongs to the sirtuin family. Class III subfamily.</text>
</comment>
<gene>
    <name evidence="2" type="primary">SIRT5</name>
    <name type="synonym">SIR2L5</name>
</gene>
<keyword id="KW-0002">3D-structure</keyword>
<keyword id="KW-0025">Alternative splicing</keyword>
<keyword id="KW-0963">Cytoplasm</keyword>
<keyword id="KW-0479">Metal-binding</keyword>
<keyword id="KW-0496">Mitochondrion</keyword>
<keyword id="KW-0520">NAD</keyword>
<keyword id="KW-0539">Nucleus</keyword>
<keyword id="KW-1267">Proteomics identification</keyword>
<keyword id="KW-1185">Reference proteome</keyword>
<keyword id="KW-0808">Transferase</keyword>
<keyword id="KW-0809">Transit peptide</keyword>
<keyword id="KW-0862">Zinc</keyword>
<proteinExistence type="evidence at protein level"/>
<reference key="1">
    <citation type="journal article" date="1999" name="Biochem. Biophys. Res. Commun.">
        <title>Characterization of five human cDNAs with homology to the yeast SIR2 gene: Sir2-like proteins (sirtuins) metabolize NAD and may have protein ADP-ribosyltransferase activity.</title>
        <authorList>
            <person name="Frye R.A."/>
        </authorList>
    </citation>
    <scope>NUCLEOTIDE SEQUENCE [MRNA] (ISOFORM 1)</scope>
    <scope>TISSUE SPECIFICITY</scope>
    <source>
        <tissue>Testis</tissue>
    </source>
</reference>
<reference key="2">
    <citation type="journal article" date="2004" name="Nat. Genet.">
        <title>Complete sequencing and characterization of 21,243 full-length human cDNAs.</title>
        <authorList>
            <person name="Ota T."/>
            <person name="Suzuki Y."/>
            <person name="Nishikawa T."/>
            <person name="Otsuki T."/>
            <person name="Sugiyama T."/>
            <person name="Irie R."/>
            <person name="Wakamatsu A."/>
            <person name="Hayashi K."/>
            <person name="Sato H."/>
            <person name="Nagai K."/>
            <person name="Kimura K."/>
            <person name="Makita H."/>
            <person name="Sekine M."/>
            <person name="Obayashi M."/>
            <person name="Nishi T."/>
            <person name="Shibahara T."/>
            <person name="Tanaka T."/>
            <person name="Ishii S."/>
            <person name="Yamamoto J."/>
            <person name="Saito K."/>
            <person name="Kawai Y."/>
            <person name="Isono Y."/>
            <person name="Nakamura Y."/>
            <person name="Nagahari K."/>
            <person name="Murakami K."/>
            <person name="Yasuda T."/>
            <person name="Iwayanagi T."/>
            <person name="Wagatsuma M."/>
            <person name="Shiratori A."/>
            <person name="Sudo H."/>
            <person name="Hosoiri T."/>
            <person name="Kaku Y."/>
            <person name="Kodaira H."/>
            <person name="Kondo H."/>
            <person name="Sugawara M."/>
            <person name="Takahashi M."/>
            <person name="Kanda K."/>
            <person name="Yokoi T."/>
            <person name="Furuya T."/>
            <person name="Kikkawa E."/>
            <person name="Omura Y."/>
            <person name="Abe K."/>
            <person name="Kamihara K."/>
            <person name="Katsuta N."/>
            <person name="Sato K."/>
            <person name="Tanikawa M."/>
            <person name="Yamazaki M."/>
            <person name="Ninomiya K."/>
            <person name="Ishibashi T."/>
            <person name="Yamashita H."/>
            <person name="Murakawa K."/>
            <person name="Fujimori K."/>
            <person name="Tanai H."/>
            <person name="Kimata M."/>
            <person name="Watanabe M."/>
            <person name="Hiraoka S."/>
            <person name="Chiba Y."/>
            <person name="Ishida S."/>
            <person name="Ono Y."/>
            <person name="Takiguchi S."/>
            <person name="Watanabe S."/>
            <person name="Yosida M."/>
            <person name="Hotuta T."/>
            <person name="Kusano J."/>
            <person name="Kanehori K."/>
            <person name="Takahashi-Fujii A."/>
            <person name="Hara H."/>
            <person name="Tanase T.-O."/>
            <person name="Nomura Y."/>
            <person name="Togiya S."/>
            <person name="Komai F."/>
            <person name="Hara R."/>
            <person name="Takeuchi K."/>
            <person name="Arita M."/>
            <person name="Imose N."/>
            <person name="Musashino K."/>
            <person name="Yuuki H."/>
            <person name="Oshima A."/>
            <person name="Sasaki N."/>
            <person name="Aotsuka S."/>
            <person name="Yoshikawa Y."/>
            <person name="Matsunawa H."/>
            <person name="Ichihara T."/>
            <person name="Shiohata N."/>
            <person name="Sano S."/>
            <person name="Moriya S."/>
            <person name="Momiyama H."/>
            <person name="Satoh N."/>
            <person name="Takami S."/>
            <person name="Terashima Y."/>
            <person name="Suzuki O."/>
            <person name="Nakagawa S."/>
            <person name="Senoh A."/>
            <person name="Mizoguchi H."/>
            <person name="Goto Y."/>
            <person name="Shimizu F."/>
            <person name="Wakebe H."/>
            <person name="Hishigaki H."/>
            <person name="Watanabe T."/>
            <person name="Sugiyama A."/>
            <person name="Takemoto M."/>
            <person name="Kawakami B."/>
            <person name="Yamazaki M."/>
            <person name="Watanabe K."/>
            <person name="Kumagai A."/>
            <person name="Itakura S."/>
            <person name="Fukuzumi Y."/>
            <person name="Fujimori Y."/>
            <person name="Komiyama M."/>
            <person name="Tashiro H."/>
            <person name="Tanigami A."/>
            <person name="Fujiwara T."/>
            <person name="Ono T."/>
            <person name="Yamada K."/>
            <person name="Fujii Y."/>
            <person name="Ozaki K."/>
            <person name="Hirao M."/>
            <person name="Ohmori Y."/>
            <person name="Kawabata A."/>
            <person name="Hikiji T."/>
            <person name="Kobatake N."/>
            <person name="Inagaki H."/>
            <person name="Ikema Y."/>
            <person name="Okamoto S."/>
            <person name="Okitani R."/>
            <person name="Kawakami T."/>
            <person name="Noguchi S."/>
            <person name="Itoh T."/>
            <person name="Shigeta K."/>
            <person name="Senba T."/>
            <person name="Matsumura K."/>
            <person name="Nakajima Y."/>
            <person name="Mizuno T."/>
            <person name="Morinaga M."/>
            <person name="Sasaki M."/>
            <person name="Togashi T."/>
            <person name="Oyama M."/>
            <person name="Hata H."/>
            <person name="Watanabe M."/>
            <person name="Komatsu T."/>
            <person name="Mizushima-Sugano J."/>
            <person name="Satoh T."/>
            <person name="Shirai Y."/>
            <person name="Takahashi Y."/>
            <person name="Nakagawa K."/>
            <person name="Okumura K."/>
            <person name="Nagase T."/>
            <person name="Nomura N."/>
            <person name="Kikuchi H."/>
            <person name="Masuho Y."/>
            <person name="Yamashita R."/>
            <person name="Nakai K."/>
            <person name="Yada T."/>
            <person name="Nakamura Y."/>
            <person name="Ohara O."/>
            <person name="Isogai T."/>
            <person name="Sugano S."/>
        </authorList>
    </citation>
    <scope>NUCLEOTIDE SEQUENCE [LARGE SCALE MRNA] (ISOFORMS 2; 3 AND 4)</scope>
    <source>
        <tissue>Amygdala</tissue>
        <tissue>Hepatoblastoma</tissue>
        <tissue>Testis</tissue>
    </source>
</reference>
<reference key="3">
    <citation type="journal article" date="2007" name="BMC Genomics">
        <title>The full-ORF clone resource of the German cDNA consortium.</title>
        <authorList>
            <person name="Bechtel S."/>
            <person name="Rosenfelder H."/>
            <person name="Duda A."/>
            <person name="Schmidt C.P."/>
            <person name="Ernst U."/>
            <person name="Wellenreuther R."/>
            <person name="Mehrle A."/>
            <person name="Schuster C."/>
            <person name="Bahr A."/>
            <person name="Bloecker H."/>
            <person name="Heubner D."/>
            <person name="Hoerlein A."/>
            <person name="Michel G."/>
            <person name="Wedler H."/>
            <person name="Koehrer K."/>
            <person name="Ottenwaelder B."/>
            <person name="Poustka A."/>
            <person name="Wiemann S."/>
            <person name="Schupp I."/>
        </authorList>
    </citation>
    <scope>NUCLEOTIDE SEQUENCE [LARGE SCALE MRNA]</scope>
</reference>
<reference key="4">
    <citation type="journal article" date="2003" name="Nature">
        <title>The DNA sequence and analysis of human chromosome 6.</title>
        <authorList>
            <person name="Mungall A.J."/>
            <person name="Palmer S.A."/>
            <person name="Sims S.K."/>
            <person name="Edwards C.A."/>
            <person name="Ashurst J.L."/>
            <person name="Wilming L."/>
            <person name="Jones M.C."/>
            <person name="Horton R."/>
            <person name="Hunt S.E."/>
            <person name="Scott C.E."/>
            <person name="Gilbert J.G.R."/>
            <person name="Clamp M.E."/>
            <person name="Bethel G."/>
            <person name="Milne S."/>
            <person name="Ainscough R."/>
            <person name="Almeida J.P."/>
            <person name="Ambrose K.D."/>
            <person name="Andrews T.D."/>
            <person name="Ashwell R.I.S."/>
            <person name="Babbage A.K."/>
            <person name="Bagguley C.L."/>
            <person name="Bailey J."/>
            <person name="Banerjee R."/>
            <person name="Barker D.J."/>
            <person name="Barlow K.F."/>
            <person name="Bates K."/>
            <person name="Beare D.M."/>
            <person name="Beasley H."/>
            <person name="Beasley O."/>
            <person name="Bird C.P."/>
            <person name="Blakey S.E."/>
            <person name="Bray-Allen S."/>
            <person name="Brook J."/>
            <person name="Brown A.J."/>
            <person name="Brown J.Y."/>
            <person name="Burford D.C."/>
            <person name="Burrill W."/>
            <person name="Burton J."/>
            <person name="Carder C."/>
            <person name="Carter N.P."/>
            <person name="Chapman J.C."/>
            <person name="Clark S.Y."/>
            <person name="Clark G."/>
            <person name="Clee C.M."/>
            <person name="Clegg S."/>
            <person name="Cobley V."/>
            <person name="Collier R.E."/>
            <person name="Collins J.E."/>
            <person name="Colman L.K."/>
            <person name="Corby N.R."/>
            <person name="Coville G.J."/>
            <person name="Culley K.M."/>
            <person name="Dhami P."/>
            <person name="Davies J."/>
            <person name="Dunn M."/>
            <person name="Earthrowl M.E."/>
            <person name="Ellington A.E."/>
            <person name="Evans K.A."/>
            <person name="Faulkner L."/>
            <person name="Francis M.D."/>
            <person name="Frankish A."/>
            <person name="Frankland J."/>
            <person name="French L."/>
            <person name="Garner P."/>
            <person name="Garnett J."/>
            <person name="Ghori M.J."/>
            <person name="Gilby L.M."/>
            <person name="Gillson C.J."/>
            <person name="Glithero R.J."/>
            <person name="Grafham D.V."/>
            <person name="Grant M."/>
            <person name="Gribble S."/>
            <person name="Griffiths C."/>
            <person name="Griffiths M.N.D."/>
            <person name="Hall R."/>
            <person name="Halls K.S."/>
            <person name="Hammond S."/>
            <person name="Harley J.L."/>
            <person name="Hart E.A."/>
            <person name="Heath P.D."/>
            <person name="Heathcott R."/>
            <person name="Holmes S.J."/>
            <person name="Howden P.J."/>
            <person name="Howe K.L."/>
            <person name="Howell G.R."/>
            <person name="Huckle E."/>
            <person name="Humphray S.J."/>
            <person name="Humphries M.D."/>
            <person name="Hunt A.R."/>
            <person name="Johnson C.M."/>
            <person name="Joy A.A."/>
            <person name="Kay M."/>
            <person name="Keenan S.J."/>
            <person name="Kimberley A.M."/>
            <person name="King A."/>
            <person name="Laird G.K."/>
            <person name="Langford C."/>
            <person name="Lawlor S."/>
            <person name="Leongamornlert D.A."/>
            <person name="Leversha M."/>
            <person name="Lloyd C.R."/>
            <person name="Lloyd D.M."/>
            <person name="Loveland J.E."/>
            <person name="Lovell J."/>
            <person name="Martin S."/>
            <person name="Mashreghi-Mohammadi M."/>
            <person name="Maslen G.L."/>
            <person name="Matthews L."/>
            <person name="McCann O.T."/>
            <person name="McLaren S.J."/>
            <person name="McLay K."/>
            <person name="McMurray A."/>
            <person name="Moore M.J.F."/>
            <person name="Mullikin J.C."/>
            <person name="Niblett D."/>
            <person name="Nickerson T."/>
            <person name="Novik K.L."/>
            <person name="Oliver K."/>
            <person name="Overton-Larty E.K."/>
            <person name="Parker A."/>
            <person name="Patel R."/>
            <person name="Pearce A.V."/>
            <person name="Peck A.I."/>
            <person name="Phillimore B.J.C.T."/>
            <person name="Phillips S."/>
            <person name="Plumb R.W."/>
            <person name="Porter K.M."/>
            <person name="Ramsey Y."/>
            <person name="Ranby S.A."/>
            <person name="Rice C.M."/>
            <person name="Ross M.T."/>
            <person name="Searle S.M."/>
            <person name="Sehra H.K."/>
            <person name="Sheridan E."/>
            <person name="Skuce C.D."/>
            <person name="Smith S."/>
            <person name="Smith M."/>
            <person name="Spraggon L."/>
            <person name="Squares S.L."/>
            <person name="Steward C.A."/>
            <person name="Sycamore N."/>
            <person name="Tamlyn-Hall G."/>
            <person name="Tester J."/>
            <person name="Theaker A.J."/>
            <person name="Thomas D.W."/>
            <person name="Thorpe A."/>
            <person name="Tracey A."/>
            <person name="Tromans A."/>
            <person name="Tubby B."/>
            <person name="Wall M."/>
            <person name="Wallis J.M."/>
            <person name="West A.P."/>
            <person name="White S.S."/>
            <person name="Whitehead S.L."/>
            <person name="Whittaker H."/>
            <person name="Wild A."/>
            <person name="Willey D.J."/>
            <person name="Wilmer T.E."/>
            <person name="Wood J.M."/>
            <person name="Wray P.W."/>
            <person name="Wyatt J.C."/>
            <person name="Young L."/>
            <person name="Younger R.M."/>
            <person name="Bentley D.R."/>
            <person name="Coulson A."/>
            <person name="Durbin R.M."/>
            <person name="Hubbard T."/>
            <person name="Sulston J.E."/>
            <person name="Dunham I."/>
            <person name="Rogers J."/>
            <person name="Beck S."/>
        </authorList>
    </citation>
    <scope>NUCLEOTIDE SEQUENCE [LARGE SCALE GENOMIC DNA]</scope>
</reference>
<reference key="5">
    <citation type="submission" date="2005-07" db="EMBL/GenBank/DDBJ databases">
        <authorList>
            <person name="Mural R.J."/>
            <person name="Istrail S."/>
            <person name="Sutton G.G."/>
            <person name="Florea L."/>
            <person name="Halpern A.L."/>
            <person name="Mobarry C.M."/>
            <person name="Lippert R."/>
            <person name="Walenz B."/>
            <person name="Shatkay H."/>
            <person name="Dew I."/>
            <person name="Miller J.R."/>
            <person name="Flanigan M.J."/>
            <person name="Edwards N.J."/>
            <person name="Bolanos R."/>
            <person name="Fasulo D."/>
            <person name="Halldorsson B.V."/>
            <person name="Hannenhalli S."/>
            <person name="Turner R."/>
            <person name="Yooseph S."/>
            <person name="Lu F."/>
            <person name="Nusskern D.R."/>
            <person name="Shue B.C."/>
            <person name="Zheng X.H."/>
            <person name="Zhong F."/>
            <person name="Delcher A.L."/>
            <person name="Huson D.H."/>
            <person name="Kravitz S.A."/>
            <person name="Mouchard L."/>
            <person name="Reinert K."/>
            <person name="Remington K.A."/>
            <person name="Clark A.G."/>
            <person name="Waterman M.S."/>
            <person name="Eichler E.E."/>
            <person name="Adams M.D."/>
            <person name="Hunkapiller M.W."/>
            <person name="Myers E.W."/>
            <person name="Venter J.C."/>
        </authorList>
    </citation>
    <scope>NUCLEOTIDE SEQUENCE [LARGE SCALE GENOMIC DNA]</scope>
</reference>
<reference key="6">
    <citation type="journal article" date="2004" name="Genome Res.">
        <title>The status, quality, and expansion of the NIH full-length cDNA project: the Mammalian Gene Collection (MGC).</title>
        <authorList>
            <consortium name="The MGC Project Team"/>
        </authorList>
    </citation>
    <scope>NUCLEOTIDE SEQUENCE [LARGE SCALE MRNA] (ISOFORM 1)</scope>
    <source>
        <tissue>Eye</tissue>
    </source>
</reference>
<reference key="7">
    <citation type="journal article" date="2005" name="Mol. Biol. Cell">
        <title>Evolutionarily conserved and nonconserved cellular localizations and functions of human SIRT proteins.</title>
        <authorList>
            <person name="Michishita E."/>
            <person name="Park J.Y."/>
            <person name="Burneskis J.M."/>
            <person name="Barrett J.C."/>
            <person name="Horikawa I."/>
        </authorList>
    </citation>
    <scope>SUBCELLULAR LOCATION</scope>
</reference>
<reference key="8">
    <citation type="journal article" date="2008" name="J. Mol. Biol.">
        <title>Substrates and regulation mechanisms for the human mitochondrial sirtuins Sirt3 and Sirt5.</title>
        <authorList>
            <person name="Schlicker C."/>
            <person name="Gertz M."/>
            <person name="Papatheodorou P."/>
            <person name="Kachholz B."/>
            <person name="Becker C.F.W."/>
            <person name="Steegborn C."/>
        </authorList>
    </citation>
    <scope>FUNCTION</scope>
    <scope>SUBCELLULAR LOCATION</scope>
</reference>
<reference key="9">
    <citation type="journal article" date="2011" name="BMC Syst. Biol.">
        <title>Initial characterization of the human central proteome.</title>
        <authorList>
            <person name="Burkard T.R."/>
            <person name="Planyavsky M."/>
            <person name="Kaupe I."/>
            <person name="Breitwieser F.P."/>
            <person name="Buerckstuemmer T."/>
            <person name="Bennett K.L."/>
            <person name="Superti-Furga G."/>
            <person name="Colinge J."/>
        </authorList>
    </citation>
    <scope>IDENTIFICATION BY MASS SPECTROMETRY [LARGE SCALE ANALYSIS]</scope>
</reference>
<reference key="10">
    <citation type="journal article" date="2011" name="Genes Cells">
        <title>Distinct regulation of mitochondrial localization and stability of two human Sirt5 isoforms.</title>
        <authorList>
            <person name="Matsushita N."/>
            <person name="Yonashiro R."/>
            <person name="Ogata Y."/>
            <person name="Sugiura A."/>
            <person name="Nagashima S."/>
            <person name="Fukuda T."/>
            <person name="Inatome R."/>
            <person name="Yanagi S."/>
        </authorList>
    </citation>
    <scope>ALTERNATIVE SPLICING (ISOFORMS 1 AND 2)</scope>
    <scope>SUBCELLULAR LOCATION (ISOFORMS 1 AND 2)</scope>
</reference>
<reference key="11">
    <citation type="journal article" date="2011" name="Mol. Cell. Proteomics">
        <title>The first identification of lysine malonylation substrates and its regulatory enzyme.</title>
        <authorList>
            <person name="Peng C."/>
            <person name="Lu Z."/>
            <person name="Xie Z."/>
            <person name="Cheng Z."/>
            <person name="Chen Y."/>
            <person name="Tan M."/>
            <person name="Luo H."/>
            <person name="Zhang Y."/>
            <person name="He W."/>
            <person name="Yang K."/>
            <person name="Zwaans B.M."/>
            <person name="Tishkoff D."/>
            <person name="Ho L."/>
            <person name="Lombard D."/>
            <person name="He T.C."/>
            <person name="Dai J."/>
            <person name="Verdin E."/>
            <person name="Ye Y."/>
            <person name="Zhao Y."/>
        </authorList>
    </citation>
    <scope>FUNCTION</scope>
    <scope>NAD-BINDING</scope>
    <scope>MUTAGENESIS OF HIS-158</scope>
</reference>
<reference key="12">
    <citation type="journal article" date="2012" name="PLoS ONE">
        <title>Sirt5 deacylation activities show differential sensitivities to nicotinamide inhibition.</title>
        <authorList>
            <person name="Fischer F."/>
            <person name="Gertz M."/>
            <person name="Suenkel B."/>
            <person name="Lakshminarasimhan M."/>
            <person name="Schutkowski M."/>
            <person name="Steegborn C."/>
        </authorList>
    </citation>
    <scope>ACTIVITY REGULATION</scope>
    <scope>MUTAGENESIS OF THR-69 AND ARG-105</scope>
</reference>
<reference key="13">
    <citation type="journal article" date="2013" name="Biochem. Biophys. Res. Commun.">
        <title>SIRT5 desuccinylates and activates SOD1 to eliminate ROS.</title>
        <authorList>
            <person name="Lin Z.F."/>
            <person name="Xu H.B."/>
            <person name="Wang J.Y."/>
            <person name="Lin Q."/>
            <person name="Ruan Z."/>
            <person name="Liu F.B."/>
            <person name="Jin W."/>
            <person name="Huang H.H."/>
            <person name="Chen X."/>
        </authorList>
    </citation>
    <scope>FUNCTION</scope>
</reference>
<reference key="14">
    <citation type="journal article" date="2013" name="Mitochondrion">
        <title>Mitochondrial SIRT4-type proteins in Caenorhabditis elegans and mammals interact with pyruvate carboxylase and other acetylated biotin-dependent carboxylases.</title>
        <authorList>
            <person name="Wirth M."/>
            <person name="Karaca S."/>
            <person name="Wenzel D."/>
            <person name="Ho L."/>
            <person name="Tishkoff D."/>
            <person name="Lombard D.B."/>
            <person name="Verdin E."/>
            <person name="Urlaub H."/>
            <person name="Jedrusik-Bode M."/>
            <person name="Fischle W."/>
        </authorList>
    </citation>
    <scope>INTERACTION WITH PCCA</scope>
</reference>
<reference key="15">
    <citation type="journal article" date="2013" name="Mol. Cell">
        <title>SIRT5-mediated lysine desuccinylation impacts diverse metabolic pathways.</title>
        <authorList>
            <person name="Park J."/>
            <person name="Chen Y."/>
            <person name="Tishkoff D.X."/>
            <person name="Peng C."/>
            <person name="Tan M."/>
            <person name="Dai L."/>
            <person name="Xie Z."/>
            <person name="Zhang Y."/>
            <person name="Zwaans B.M."/>
            <person name="Skinner M.E."/>
            <person name="Lombard D.B."/>
            <person name="Zhao Y."/>
        </authorList>
    </citation>
    <scope>SUBCELLULAR LOCATION</scope>
</reference>
<reference key="16">
    <citation type="journal article" date="2014" name="Cell Metab.">
        <title>Lysine glutarylation is a protein posttranslational modification regulated by SIRT5.</title>
        <authorList>
            <person name="Tan M."/>
            <person name="Peng C."/>
            <person name="Anderson K.A."/>
            <person name="Chhoy P."/>
            <person name="Xie Z."/>
            <person name="Dai L."/>
            <person name="Park J."/>
            <person name="Chen Y."/>
            <person name="Huang H."/>
            <person name="Zhang Y."/>
            <person name="Ro J."/>
            <person name="Wagner G.R."/>
            <person name="Green M.F."/>
            <person name="Madsen A.S."/>
            <person name="Schmiesing J."/>
            <person name="Peterson B.S."/>
            <person name="Xu G."/>
            <person name="Ilkayeva O.R."/>
            <person name="Muehlbauer M.J."/>
            <person name="Braulke T."/>
            <person name="Muehlhausen C."/>
            <person name="Backos D.S."/>
            <person name="Olsen C.A."/>
            <person name="McGuire P.J."/>
            <person name="Pletcher S.D."/>
            <person name="Lombard D.B."/>
            <person name="Hirschey M.D."/>
            <person name="Zhao Y."/>
        </authorList>
    </citation>
    <scope>FUNCTION</scope>
    <scope>CATALYTIC ACTIVITY</scope>
    <scope>MUTAGENESIS OF HIS-158</scope>
</reference>
<reference key="17">
    <citation type="journal article" date="2014" name="J. Proteomics">
        <title>An enzyme assisted RP-RPLC approach for in-depth analysis of human liver phosphoproteome.</title>
        <authorList>
            <person name="Bian Y."/>
            <person name="Song C."/>
            <person name="Cheng K."/>
            <person name="Dong M."/>
            <person name="Wang F."/>
            <person name="Huang J."/>
            <person name="Sun D."/>
            <person name="Wang L."/>
            <person name="Ye M."/>
            <person name="Zou H."/>
        </authorList>
    </citation>
    <scope>IDENTIFICATION BY MASS SPECTROMETRY [LARGE SCALE ANALYSIS]</scope>
    <source>
        <tissue>Liver</tissue>
    </source>
</reference>
<reference key="18">
    <citation type="journal article" date="2018" name="Cancer Res.">
        <title>SHMT2 desuccinylation by SIRT5 drives cancer cell proliferation.</title>
        <authorList>
            <person name="Yang X."/>
            <person name="Wang Z."/>
            <person name="Li X."/>
            <person name="Liu B."/>
            <person name="Liu M."/>
            <person name="Liu L."/>
            <person name="Chen S."/>
            <person name="Ren M."/>
            <person name="Wang Y."/>
            <person name="Yu M."/>
            <person name="Wang B."/>
            <person name="Zou J."/>
            <person name="Zhu W.G."/>
            <person name="Yin Y."/>
            <person name="Gu W."/>
            <person name="Luo J."/>
        </authorList>
    </citation>
    <scope>FUNCTION</scope>
    <scope>CATALYTIC ACTIVITY</scope>
    <scope>MUTAGENESIS OF HIS-158</scope>
</reference>
<reference key="19">
    <citation type="submission" date="2006-02" db="PDB data bank">
        <title>Crystal structure of human sirtuin homolog 5 in complex with NAD.</title>
        <authorList>
            <consortium name="Structural genomics consortium (SGC)"/>
        </authorList>
    </citation>
    <scope>X-RAY CRYSTALLOGRAPHY (1.90 ANGSTROMS) OF 34-302 IN COMPLEX WITH NAD AND ZINC IONS</scope>
</reference>
<reference key="20">
    <citation type="journal article" date="2007" name="Structure">
        <title>Structural basis of inhibition of the human NAD+-dependent deacetylase SIRT5 by suramin.</title>
        <authorList>
            <person name="Schuetz A."/>
            <person name="Min J."/>
            <person name="Antoshenko T."/>
            <person name="Wang C.-L."/>
            <person name="Allali-Hassani A."/>
            <person name="Dong A."/>
            <person name="Loppnau P."/>
            <person name="Vedadi M."/>
            <person name="Bochkarev A."/>
            <person name="Sternglanz R."/>
            <person name="Plotnikov A.N."/>
        </authorList>
    </citation>
    <scope>X-RAY CRYSTALLOGRAPHY (2.06 ANGSTROMS) OF 34-302 IN COMPLEXES WITH ZINC IONS; SURAMIN AND ADP-RIBOSE</scope>
    <scope>CATALYTIC ACTIVITY</scope>
    <scope>ACTIVITY REGULATION</scope>
    <scope>SUBUNIT</scope>
</reference>
<reference key="21">
    <citation type="journal article" date="2011" name="Science">
        <title>Sirt5 is a NAD-dependent protein lysine demalonylase and desuccinylase.</title>
        <authorList>
            <person name="Du J."/>
            <person name="Zhou Y."/>
            <person name="Su X."/>
            <person name="Yu J.J."/>
            <person name="Khan S."/>
            <person name="Jiang H."/>
            <person name="Kim J."/>
            <person name="Woo J."/>
            <person name="Kim J.H."/>
            <person name="Choi B.H."/>
            <person name="He B."/>
            <person name="Chen W."/>
            <person name="Zhang S."/>
            <person name="Cerione R.A."/>
            <person name="Auwerx J."/>
            <person name="Hao Q."/>
            <person name="Lin H."/>
        </authorList>
    </citation>
    <scope>X-RAY CRYSTALLOGRAPHY (2.0 ANGSTROMS) OF 34-302 IN COMPLEX WITH NAD; ZINC IONS AND SUCCINYLATED PEPTIDE</scope>
    <scope>COFACTOR</scope>
    <scope>ACTIVE SITE</scope>
    <scope>BIOPHYSICOCHEMICAL PROPERTIES</scope>
    <scope>FUNCTION</scope>
    <scope>CATALYTIC ACTIVITY</scope>
    <scope>MUTAGENESIS OF TYR-102; ARG-105 AND HIS-158</scope>
</reference>
<reference key="22">
    <citation type="journal article" date="2012" name="J. Biol. Chem.">
        <title>The bicyclic intermediate structure provides insights into the desuccinylation mechanism of human sirtuin 5 (SIRT5).</title>
        <authorList>
            <person name="Zhou Y."/>
            <person name="Zhang H."/>
            <person name="He B."/>
            <person name="Du J."/>
            <person name="Lin H."/>
            <person name="Cerione R.A."/>
            <person name="Hao Q."/>
        </authorList>
    </citation>
    <scope>X-RAY CRYSTALLOGRAPHY (2.0 ANGSTROMS) OF 34-302 IN COMPLEX WITH NAD; ZINC IONS AND SUCCINYLATED PEPTIDE</scope>
    <scope>REACTION MECHANISM</scope>
</reference>
<reference key="23">
    <citation type="journal article" date="2012" name="J. Org. Chem.">
        <title>Synthesis of carba-NAD and the structures of its ternary complexes with SIRT3 and SIRT5.</title>
        <authorList>
            <person name="Szczepankiewicz B.G."/>
            <person name="Dai H."/>
            <person name="Koppetsch K.J."/>
            <person name="Qian D."/>
            <person name="Jiang F."/>
            <person name="Mao C."/>
            <person name="Perni R.B."/>
        </authorList>
    </citation>
    <scope>X-RAY CRYSTALLOGRAPHY (1.94 ANGSTROMS) OF 36-302 IN COMPLEX WITH CARBA-NAD AND ZINC IONS</scope>
</reference>
<reference key="24">
    <citation type="journal article" date="2012" name="PLoS ONE">
        <title>A molecular mechanism for direct sirtuin activation by resveratrol.</title>
        <authorList>
            <person name="Gertz M."/>
            <person name="Nguyen G.T."/>
            <person name="Fischer F."/>
            <person name="Suenkel B."/>
            <person name="Schlicker C."/>
            <person name="Franzel B."/>
            <person name="Tomaschewski J."/>
            <person name="Aladini F."/>
            <person name="Becker C."/>
            <person name="Wolters D."/>
            <person name="Steegborn C."/>
        </authorList>
    </citation>
    <scope>X-RAY CRYSTALLOGRAPHY (2.6 ANGSTROMS) OF 34-302 IN COMPLEX WITH PROTEIN PEPTIDE; ZINC IONS AND RESVERATROL</scope>
    <scope>ACTIVITY REGULATION</scope>
</reference>
<sequence length="310" mass="33881">MRPLQIVPSRLISQLYCGLKPPASTRNQICLKMARPSSSMADFRKFFAKAKHIVIISGAGVSAESGVPTFRGAGGYWRKWQAQDLATPLAFAHNPSRVWEFYHYRREVMGSKEPNAGHRAIAECETRLGKQGRRVVVITQNIDELHRKAGTKNLLEIHGSLFKTRCTSCGVVAENYKSPICPALSGKGAPEPGTQDASIPVEKLPRCEEAGCGGLLRPHVVWFGENLDPAILEEVDRELAHCDLCLVVGTSSVVYPAAMFAPQVAARGVPVAEFNTETTPATNRFRFHFQGPCGTTLPEALACHENETVS</sequence>
<accession>Q9NXA8</accession>
<accession>B4DFM4</accession>
<accession>B4DYJ5</accession>
<accession>F5H5Z9</accession>
<accession>Q5T294</accession>
<accession>Q5T295</accession>
<accession>Q9Y6E6</accession>
<evidence type="ECO:0000250" key="1">
    <source>
        <dbReference type="UniProtKB" id="Q8K2C6"/>
    </source>
</evidence>
<evidence type="ECO:0000255" key="2">
    <source>
        <dbReference type="HAMAP-Rule" id="MF_03160"/>
    </source>
</evidence>
<evidence type="ECO:0000255" key="3">
    <source>
        <dbReference type="PROSITE-ProRule" id="PRU00236"/>
    </source>
</evidence>
<evidence type="ECO:0000269" key="4">
    <source>
    </source>
</evidence>
<evidence type="ECO:0000269" key="5">
    <source>
    </source>
</evidence>
<evidence type="ECO:0000269" key="6">
    <source>
    </source>
</evidence>
<evidence type="ECO:0000269" key="7">
    <source>
    </source>
</evidence>
<evidence type="ECO:0000269" key="8">
    <source>
    </source>
</evidence>
<evidence type="ECO:0000269" key="9">
    <source>
    </source>
</evidence>
<evidence type="ECO:0000269" key="10">
    <source>
    </source>
</evidence>
<evidence type="ECO:0000269" key="11">
    <source>
    </source>
</evidence>
<evidence type="ECO:0000269" key="12">
    <source>
    </source>
</evidence>
<evidence type="ECO:0000269" key="13">
    <source>
    </source>
</evidence>
<evidence type="ECO:0000269" key="14">
    <source>
    </source>
</evidence>
<evidence type="ECO:0000269" key="15">
    <source>
    </source>
</evidence>
<evidence type="ECO:0000269" key="16">
    <source>
    </source>
</evidence>
<evidence type="ECO:0000269" key="17">
    <source>
    </source>
</evidence>
<evidence type="ECO:0000269" key="18">
    <source ref="19"/>
</evidence>
<evidence type="ECO:0000303" key="19">
    <source>
    </source>
</evidence>
<evidence type="ECO:0000305" key="20"/>
<evidence type="ECO:0000305" key="21">
    <source>
    </source>
</evidence>
<evidence type="ECO:0007829" key="22">
    <source>
        <dbReference type="PDB" id="4HDA"/>
    </source>
</evidence>
<evidence type="ECO:0007829" key="23">
    <source>
        <dbReference type="PDB" id="5BWL"/>
    </source>
</evidence>
<evidence type="ECO:0007829" key="24">
    <source>
        <dbReference type="PDB" id="6EQS"/>
    </source>
</evidence>
<protein>
    <recommendedName>
        <fullName evidence="2">NAD-dependent protein deacylase sirtuin-5, mitochondrial</fullName>
        <ecNumber evidence="2 9 16 17">2.3.1.-</ecNumber>
    </recommendedName>
    <alternativeName>
        <fullName evidence="2">Regulatory protein SIR2 homolog 5</fullName>
    </alternativeName>
    <alternativeName>
        <fullName evidence="2">SIR2-like protein 5</fullName>
    </alternativeName>
</protein>
<feature type="transit peptide" description="Mitochondrion" evidence="2">
    <location>
        <begin position="1"/>
        <end position="36"/>
    </location>
</feature>
<feature type="chain" id="PRO_0000110266" description="NAD-dependent protein deacylase sirtuin-5, mitochondrial">
    <location>
        <begin position="37"/>
        <end position="310"/>
    </location>
</feature>
<feature type="domain" description="Deacetylase sirtuin-type" evidence="3">
    <location>
        <begin position="37"/>
        <end position="307"/>
    </location>
</feature>
<feature type="active site" description="Proton acceptor" evidence="3 9 17">
    <location>
        <position position="158"/>
    </location>
</feature>
<feature type="binding site" evidence="2 9 10 18">
    <location>
        <begin position="58"/>
        <end position="77"/>
    </location>
    <ligand>
        <name>NAD(+)</name>
        <dbReference type="ChEBI" id="CHEBI:57540"/>
    </ligand>
</feature>
<feature type="binding site" evidence="2">
    <location>
        <position position="102"/>
    </location>
    <ligand>
        <name>substrate</name>
    </ligand>
</feature>
<feature type="binding site" evidence="2">
    <location>
        <position position="105"/>
    </location>
    <ligand>
        <name>substrate</name>
    </ligand>
</feature>
<feature type="binding site" evidence="2 9 10 18">
    <location>
        <begin position="140"/>
        <end position="143"/>
    </location>
    <ligand>
        <name>NAD(+)</name>
        <dbReference type="ChEBI" id="CHEBI:57540"/>
    </ligand>
</feature>
<feature type="binding site" evidence="2">
    <location>
        <position position="166"/>
    </location>
    <ligand>
        <name>Zn(2+)</name>
        <dbReference type="ChEBI" id="CHEBI:29105"/>
    </ligand>
</feature>
<feature type="binding site" evidence="2">
    <location>
        <position position="169"/>
    </location>
    <ligand>
        <name>Zn(2+)</name>
        <dbReference type="ChEBI" id="CHEBI:29105"/>
    </ligand>
</feature>
<feature type="binding site" evidence="2">
    <location>
        <position position="207"/>
    </location>
    <ligand>
        <name>Zn(2+)</name>
        <dbReference type="ChEBI" id="CHEBI:29105"/>
    </ligand>
</feature>
<feature type="binding site" evidence="2">
    <location>
        <position position="212"/>
    </location>
    <ligand>
        <name>Zn(2+)</name>
        <dbReference type="ChEBI" id="CHEBI:29105"/>
    </ligand>
</feature>
<feature type="binding site" evidence="2 9 10 18">
    <location>
        <begin position="249"/>
        <end position="251"/>
    </location>
    <ligand>
        <name>NAD(+)</name>
        <dbReference type="ChEBI" id="CHEBI:57540"/>
    </ligand>
</feature>
<feature type="binding site" evidence="2 9 10 18">
    <location>
        <begin position="275"/>
        <end position="277"/>
    </location>
    <ligand>
        <name>NAD(+)</name>
        <dbReference type="ChEBI" id="CHEBI:57540"/>
    </ligand>
</feature>
<feature type="binding site" evidence="2 9 10 18">
    <location>
        <position position="293"/>
    </location>
    <ligand>
        <name>NAD(+)</name>
        <dbReference type="ChEBI" id="CHEBI:57540"/>
    </ligand>
</feature>
<feature type="splice variant" id="VSP_042291" description="In isoform 4." evidence="19">
    <location>
        <begin position="1"/>
        <end position="108"/>
    </location>
</feature>
<feature type="splice variant" id="VSP_042292" description="In isoform 3." evidence="19">
    <location>
        <begin position="189"/>
        <end position="206"/>
    </location>
</feature>
<feature type="splice variant" id="VSP_008730" description="In isoform 2." evidence="19">
    <original>RFHFQGPCGTTLPE</original>
    <variation>SHLISISSLIIIKN</variation>
    <location>
        <begin position="286"/>
        <end position="299"/>
    </location>
</feature>
<feature type="splice variant" id="VSP_008731" description="In isoform 2." evidence="19">
    <location>
        <begin position="300"/>
        <end position="310"/>
    </location>
</feature>
<feature type="sequence variant" id="VAR_029042" description="In dbSNP:rs9464003.">
    <original>F</original>
    <variation>L</variation>
    <location>
        <position position="285"/>
    </location>
</feature>
<feature type="sequence variant" id="VAR_051980" description="In dbSNP:rs34162626.">
    <original>E</original>
    <variation>G</variation>
    <location>
        <position position="305"/>
    </location>
</feature>
<feature type="mutagenesis site" description="Abolishes enzyme activity." evidence="12">
    <original>T</original>
    <variation>A</variation>
    <location>
        <position position="69"/>
    </location>
</feature>
<feature type="mutagenesis site" description="Increases the KM for desuccinylation." evidence="9">
    <original>Y</original>
    <variation>F</variation>
    <location>
        <position position="102"/>
    </location>
</feature>
<feature type="mutagenesis site" description="Increases the KM for desuccinylation. Does not affect deacetylase activity." evidence="9 12">
    <original>R</original>
    <variation>M</variation>
    <location>
        <position position="105"/>
    </location>
</feature>
<feature type="mutagenesis site" description="Abolishes desuccinylation and deglutarylation activity." evidence="8 9 16 17">
    <original>H</original>
    <variation>A</variation>
    <location>
        <position position="158"/>
    </location>
</feature>
<feature type="sequence conflict" description="In Ref. 2; BAG63757." evidence="20" ref="2">
    <original>I</original>
    <variation>M</variation>
    <location>
        <position position="53"/>
    </location>
</feature>
<feature type="helix" evidence="24">
    <location>
        <begin position="40"/>
        <end position="49"/>
    </location>
</feature>
<feature type="strand" evidence="24">
    <location>
        <begin position="51"/>
        <end position="57"/>
    </location>
</feature>
<feature type="helix" evidence="24">
    <location>
        <begin position="60"/>
        <end position="63"/>
    </location>
</feature>
<feature type="turn" evidence="24">
    <location>
        <begin position="64"/>
        <end position="66"/>
    </location>
</feature>
<feature type="helix" evidence="24">
    <location>
        <begin position="72"/>
        <end position="75"/>
    </location>
</feature>
<feature type="helix" evidence="24">
    <location>
        <begin position="82"/>
        <end position="85"/>
    </location>
</feature>
<feature type="helix" evidence="24">
    <location>
        <begin position="88"/>
        <end position="93"/>
    </location>
</feature>
<feature type="helix" evidence="24">
    <location>
        <begin position="95"/>
        <end position="109"/>
    </location>
</feature>
<feature type="helix" evidence="24">
    <location>
        <begin position="116"/>
        <end position="130"/>
    </location>
</feature>
<feature type="strand" evidence="24">
    <location>
        <begin position="134"/>
        <end position="139"/>
    </location>
</feature>
<feature type="helix" evidence="24">
    <location>
        <begin position="145"/>
        <end position="148"/>
    </location>
</feature>
<feature type="strand" evidence="24">
    <location>
        <begin position="152"/>
        <end position="156"/>
    </location>
</feature>
<feature type="strand" evidence="24">
    <location>
        <begin position="159"/>
        <end position="166"/>
    </location>
</feature>
<feature type="turn" evidence="24">
    <location>
        <begin position="167"/>
        <end position="169"/>
    </location>
</feature>
<feature type="strand" evidence="24">
    <location>
        <begin position="172"/>
        <end position="174"/>
    </location>
</feature>
<feature type="strand" evidence="24">
    <location>
        <begin position="178"/>
        <end position="181"/>
    </location>
</feature>
<feature type="helix" evidence="24">
    <location>
        <begin position="182"/>
        <end position="184"/>
    </location>
</feature>
<feature type="strand" evidence="22">
    <location>
        <begin position="190"/>
        <end position="193"/>
    </location>
</feature>
<feature type="helix" evidence="24">
    <location>
        <begin position="201"/>
        <end position="203"/>
    </location>
</feature>
<feature type="turn" evidence="24">
    <location>
        <begin position="210"/>
        <end position="212"/>
    </location>
</feature>
<feature type="strand" evidence="24">
    <location>
        <begin position="215"/>
        <end position="220"/>
    </location>
</feature>
<feature type="helix" evidence="24">
    <location>
        <begin position="229"/>
        <end position="241"/>
    </location>
</feature>
<feature type="strand" evidence="24">
    <location>
        <begin position="243"/>
        <end position="249"/>
    </location>
</feature>
<feature type="strand" evidence="23">
    <location>
        <begin position="252"/>
        <end position="254"/>
    </location>
</feature>
<feature type="helix" evidence="24">
    <location>
        <begin position="257"/>
        <end position="259"/>
    </location>
</feature>
<feature type="helix" evidence="24">
    <location>
        <begin position="260"/>
        <end position="266"/>
    </location>
</feature>
<feature type="strand" evidence="24">
    <location>
        <begin position="271"/>
        <end position="277"/>
    </location>
</feature>
<feature type="helix" evidence="24">
    <location>
        <begin position="282"/>
        <end position="284"/>
    </location>
</feature>
<feature type="strand" evidence="24">
    <location>
        <begin position="285"/>
        <end position="291"/>
    </location>
</feature>
<feature type="helix" evidence="24">
    <location>
        <begin position="293"/>
        <end position="300"/>
    </location>
</feature>